<dbReference type="EMBL" id="AC068667">
    <property type="protein sequence ID" value="AAG51738.1"/>
    <property type="molecule type" value="Genomic_DNA"/>
</dbReference>
<dbReference type="EMBL" id="CP002684">
    <property type="protein sequence ID" value="AEE31105.1"/>
    <property type="molecule type" value="Genomic_DNA"/>
</dbReference>
<dbReference type="PIR" id="G86418">
    <property type="entry name" value="G86418"/>
</dbReference>
<dbReference type="RefSeq" id="NP_174250.1">
    <property type="nucleotide sequence ID" value="NM_102697.1"/>
</dbReference>
<dbReference type="SMR" id="Q9C7P4"/>
<dbReference type="STRING" id="3702.Q9C7P4"/>
<dbReference type="GlyGen" id="Q9C7P4">
    <property type="glycosylation" value="1 site"/>
</dbReference>
<dbReference type="PaxDb" id="3702-AT1G29570.1"/>
<dbReference type="ProteomicsDB" id="239116"/>
<dbReference type="EnsemblPlants" id="AT1G29570.1">
    <property type="protein sequence ID" value="AT1G29570.1"/>
    <property type="gene ID" value="AT1G29570"/>
</dbReference>
<dbReference type="GeneID" id="839834"/>
<dbReference type="Gramene" id="AT1G29570.1">
    <property type="protein sequence ID" value="AT1G29570.1"/>
    <property type="gene ID" value="AT1G29570"/>
</dbReference>
<dbReference type="KEGG" id="ath:AT1G29570"/>
<dbReference type="Araport" id="AT1G29570"/>
<dbReference type="TAIR" id="AT1G29570"/>
<dbReference type="eggNOG" id="KOG1677">
    <property type="taxonomic scope" value="Eukaryota"/>
</dbReference>
<dbReference type="HOGENOM" id="CLU_1035630_0_0_1"/>
<dbReference type="InParanoid" id="Q9C7P4"/>
<dbReference type="PhylomeDB" id="Q9C7P4"/>
<dbReference type="PRO" id="PR:Q9C7P4"/>
<dbReference type="Proteomes" id="UP000006548">
    <property type="component" value="Chromosome 1"/>
</dbReference>
<dbReference type="ExpressionAtlas" id="Q9C7P4">
    <property type="expression patterns" value="baseline and differential"/>
</dbReference>
<dbReference type="GO" id="GO:0003677">
    <property type="term" value="F:DNA binding"/>
    <property type="evidence" value="ECO:0007669"/>
    <property type="project" value="UniProtKB-KW"/>
</dbReference>
<dbReference type="GO" id="GO:0003729">
    <property type="term" value="F:mRNA binding"/>
    <property type="evidence" value="ECO:0007669"/>
    <property type="project" value="UniProtKB-ARBA"/>
</dbReference>
<dbReference type="GO" id="GO:0008270">
    <property type="term" value="F:zinc ion binding"/>
    <property type="evidence" value="ECO:0007669"/>
    <property type="project" value="UniProtKB-KW"/>
</dbReference>
<dbReference type="Gene3D" id="2.30.30.1190">
    <property type="match status" value="1"/>
</dbReference>
<dbReference type="InterPro" id="IPR050974">
    <property type="entry name" value="Plant_ZF_CCCH"/>
</dbReference>
<dbReference type="InterPro" id="IPR000571">
    <property type="entry name" value="Znf_CCCH"/>
</dbReference>
<dbReference type="InterPro" id="IPR036855">
    <property type="entry name" value="Znf_CCCH_sf"/>
</dbReference>
<dbReference type="PANTHER" id="PTHR12506">
    <property type="entry name" value="PROTEIN PHOSPHATASE RELATED"/>
    <property type="match status" value="1"/>
</dbReference>
<dbReference type="PANTHER" id="PTHR12506:SF79">
    <property type="entry name" value="ZINC FINGER C-X8-C-X5-C-X3-H TYPE FAMILY PROTEIN-RELATED"/>
    <property type="match status" value="1"/>
</dbReference>
<dbReference type="Pfam" id="PF00642">
    <property type="entry name" value="zf-CCCH"/>
    <property type="match status" value="1"/>
</dbReference>
<dbReference type="SMART" id="SM00356">
    <property type="entry name" value="ZnF_C3H1"/>
    <property type="match status" value="1"/>
</dbReference>
<dbReference type="SUPFAM" id="SSF90229">
    <property type="entry name" value="CCCH zinc finger"/>
    <property type="match status" value="1"/>
</dbReference>
<dbReference type="PROSITE" id="PS50103">
    <property type="entry name" value="ZF_C3H1"/>
    <property type="match status" value="1"/>
</dbReference>
<keyword id="KW-0175">Coiled coil</keyword>
<keyword id="KW-0238">DNA-binding</keyword>
<keyword id="KW-0479">Metal-binding</keyword>
<keyword id="KW-1185">Reference proteome</keyword>
<keyword id="KW-0862">Zinc</keyword>
<keyword id="KW-0863">Zinc-finger</keyword>
<evidence type="ECO:0000255" key="1"/>
<evidence type="ECO:0000255" key="2">
    <source>
        <dbReference type="PROSITE-ProRule" id="PRU00723"/>
    </source>
</evidence>
<evidence type="ECO:0000256" key="3">
    <source>
        <dbReference type="SAM" id="MobiDB-lite"/>
    </source>
</evidence>
<accession>Q9C7P4</accession>
<name>C3H9_ARATH</name>
<organism>
    <name type="scientific">Arabidopsis thaliana</name>
    <name type="common">Mouse-ear cress</name>
    <dbReference type="NCBI Taxonomy" id="3702"/>
    <lineage>
        <taxon>Eukaryota</taxon>
        <taxon>Viridiplantae</taxon>
        <taxon>Streptophyta</taxon>
        <taxon>Embryophyta</taxon>
        <taxon>Tracheophyta</taxon>
        <taxon>Spermatophyta</taxon>
        <taxon>Magnoliopsida</taxon>
        <taxon>eudicotyledons</taxon>
        <taxon>Gunneridae</taxon>
        <taxon>Pentapetalae</taxon>
        <taxon>rosids</taxon>
        <taxon>malvids</taxon>
        <taxon>Brassicales</taxon>
        <taxon>Brassicaceae</taxon>
        <taxon>Camelineae</taxon>
        <taxon>Arabidopsis</taxon>
    </lineage>
</organism>
<feature type="chain" id="PRO_0000371968" description="Putative zinc finger CCCH domain-containing protein 9">
    <location>
        <begin position="1"/>
        <end position="321"/>
    </location>
</feature>
<feature type="zinc finger region" description="C3H1-type" evidence="2">
    <location>
        <begin position="55"/>
        <end position="83"/>
    </location>
</feature>
<feature type="region of interest" description="Disordered" evidence="3">
    <location>
        <begin position="1"/>
        <end position="59"/>
    </location>
</feature>
<feature type="region of interest" description="Disordered" evidence="3">
    <location>
        <begin position="181"/>
        <end position="269"/>
    </location>
</feature>
<feature type="coiled-coil region" evidence="1">
    <location>
        <begin position="164"/>
        <end position="290"/>
    </location>
</feature>
<feature type="compositionally biased region" description="Basic and acidic residues" evidence="3">
    <location>
        <begin position="10"/>
        <end position="29"/>
    </location>
</feature>
<feature type="compositionally biased region" description="Basic and acidic residues" evidence="3">
    <location>
        <begin position="181"/>
        <end position="224"/>
    </location>
</feature>
<feature type="compositionally biased region" description="Basic and acidic residues" evidence="3">
    <location>
        <begin position="231"/>
        <end position="244"/>
    </location>
</feature>
<reference key="1">
    <citation type="journal article" date="2000" name="Nature">
        <title>Sequence and analysis of chromosome 1 of the plant Arabidopsis thaliana.</title>
        <authorList>
            <person name="Theologis A."/>
            <person name="Ecker J.R."/>
            <person name="Palm C.J."/>
            <person name="Federspiel N.A."/>
            <person name="Kaul S."/>
            <person name="White O."/>
            <person name="Alonso J."/>
            <person name="Altafi H."/>
            <person name="Araujo R."/>
            <person name="Bowman C.L."/>
            <person name="Brooks S.Y."/>
            <person name="Buehler E."/>
            <person name="Chan A."/>
            <person name="Chao Q."/>
            <person name="Chen H."/>
            <person name="Cheuk R.F."/>
            <person name="Chin C.W."/>
            <person name="Chung M.K."/>
            <person name="Conn L."/>
            <person name="Conway A.B."/>
            <person name="Conway A.R."/>
            <person name="Creasy T.H."/>
            <person name="Dewar K."/>
            <person name="Dunn P."/>
            <person name="Etgu P."/>
            <person name="Feldblyum T.V."/>
            <person name="Feng J.-D."/>
            <person name="Fong B."/>
            <person name="Fujii C.Y."/>
            <person name="Gill J.E."/>
            <person name="Goldsmith A.D."/>
            <person name="Haas B."/>
            <person name="Hansen N.F."/>
            <person name="Hughes B."/>
            <person name="Huizar L."/>
            <person name="Hunter J.L."/>
            <person name="Jenkins J."/>
            <person name="Johnson-Hopson C."/>
            <person name="Khan S."/>
            <person name="Khaykin E."/>
            <person name="Kim C.J."/>
            <person name="Koo H.L."/>
            <person name="Kremenetskaia I."/>
            <person name="Kurtz D.B."/>
            <person name="Kwan A."/>
            <person name="Lam B."/>
            <person name="Langin-Hooper S."/>
            <person name="Lee A."/>
            <person name="Lee J.M."/>
            <person name="Lenz C.A."/>
            <person name="Li J.H."/>
            <person name="Li Y.-P."/>
            <person name="Lin X."/>
            <person name="Liu S.X."/>
            <person name="Liu Z.A."/>
            <person name="Luros J.S."/>
            <person name="Maiti R."/>
            <person name="Marziali A."/>
            <person name="Militscher J."/>
            <person name="Miranda M."/>
            <person name="Nguyen M."/>
            <person name="Nierman W.C."/>
            <person name="Osborne B.I."/>
            <person name="Pai G."/>
            <person name="Peterson J."/>
            <person name="Pham P.K."/>
            <person name="Rizzo M."/>
            <person name="Rooney T."/>
            <person name="Rowley D."/>
            <person name="Sakano H."/>
            <person name="Salzberg S.L."/>
            <person name="Schwartz J.R."/>
            <person name="Shinn P."/>
            <person name="Southwick A.M."/>
            <person name="Sun H."/>
            <person name="Tallon L.J."/>
            <person name="Tambunga G."/>
            <person name="Toriumi M.J."/>
            <person name="Town C.D."/>
            <person name="Utterback T."/>
            <person name="Van Aken S."/>
            <person name="Vaysberg M."/>
            <person name="Vysotskaia V.S."/>
            <person name="Walker M."/>
            <person name="Wu D."/>
            <person name="Yu G."/>
            <person name="Fraser C.M."/>
            <person name="Venter J.C."/>
            <person name="Davis R.W."/>
        </authorList>
    </citation>
    <scope>NUCLEOTIDE SEQUENCE [LARGE SCALE GENOMIC DNA]</scope>
    <source>
        <strain>cv. Columbia</strain>
    </source>
</reference>
<reference key="2">
    <citation type="journal article" date="2017" name="Plant J.">
        <title>Araport11: a complete reannotation of the Arabidopsis thaliana reference genome.</title>
        <authorList>
            <person name="Cheng C.Y."/>
            <person name="Krishnakumar V."/>
            <person name="Chan A.P."/>
            <person name="Thibaud-Nissen F."/>
            <person name="Schobel S."/>
            <person name="Town C.D."/>
        </authorList>
    </citation>
    <scope>GENOME REANNOTATION</scope>
    <source>
        <strain>cv. Columbia</strain>
    </source>
</reference>
<reference key="3">
    <citation type="journal article" date="2008" name="BMC Genomics">
        <title>Genome-wide analysis of CCCH zinc finger family in Arabidopsis and rice.</title>
        <authorList>
            <person name="Wang D."/>
            <person name="Guo Y."/>
            <person name="Wu C."/>
            <person name="Yang G."/>
            <person name="Li Y."/>
            <person name="Zheng C."/>
        </authorList>
    </citation>
    <scope>NOMENCLATURE</scope>
</reference>
<gene>
    <name type="ordered locus">At1g29570</name>
    <name type="ORF">F15D2.36</name>
</gene>
<sequence>MADAGDNQQEAERRSDETESRSIKEPKEKEDEDENPQDQIQSKERMRQSSPYPVRPGKKDCQFYLKNGLCRYRSSCRFNHPTQRPQELPVRICKHIMDRNVAEPMYQDWRESESERRFDERTQRTFGDERTQRRYGIEYSGARPEKRSKIVPDFQMRDPRHHDTEWRFERERMERIERQRREAEENLQEQRQRDSIERQRREAEENLQEQRQRDSIERQRREAQENLQQQRQRDSIERQRREAQENLQQQRLQDMPENHNVDDQQNLQEQRRISIEKERTEARLRLEQIRPTVSFPINEFIRAVVLLRELIENWDDKAWKK</sequence>
<proteinExistence type="predicted"/>
<protein>
    <recommendedName>
        <fullName>Putative zinc finger CCCH domain-containing protein 9</fullName>
        <shortName>AtC3H9</shortName>
    </recommendedName>
</protein>